<feature type="chain" id="PRO_0000160517" description="ATP-dependent protease ATPase subunit HslU">
    <location>
        <begin position="1"/>
        <end position="441"/>
    </location>
</feature>
<feature type="binding site" evidence="1">
    <location>
        <position position="17"/>
    </location>
    <ligand>
        <name>ATP</name>
        <dbReference type="ChEBI" id="CHEBI:30616"/>
    </ligand>
</feature>
<feature type="binding site" evidence="1">
    <location>
        <begin position="60"/>
        <end position="65"/>
    </location>
    <ligand>
        <name>ATP</name>
        <dbReference type="ChEBI" id="CHEBI:30616"/>
    </ligand>
</feature>
<feature type="binding site" evidence="1">
    <location>
        <position position="253"/>
    </location>
    <ligand>
        <name>ATP</name>
        <dbReference type="ChEBI" id="CHEBI:30616"/>
    </ligand>
</feature>
<feature type="binding site" evidence="1">
    <location>
        <position position="319"/>
    </location>
    <ligand>
        <name>ATP</name>
        <dbReference type="ChEBI" id="CHEBI:30616"/>
    </ligand>
</feature>
<feature type="binding site" evidence="1">
    <location>
        <position position="391"/>
    </location>
    <ligand>
        <name>ATP</name>
        <dbReference type="ChEBI" id="CHEBI:30616"/>
    </ligand>
</feature>
<gene>
    <name evidence="1" type="primary">hslU</name>
    <name type="ordered locus">lpl0678</name>
</gene>
<organism>
    <name type="scientific">Legionella pneumophila (strain Lens)</name>
    <dbReference type="NCBI Taxonomy" id="297245"/>
    <lineage>
        <taxon>Bacteria</taxon>
        <taxon>Pseudomonadati</taxon>
        <taxon>Pseudomonadota</taxon>
        <taxon>Gammaproteobacteria</taxon>
        <taxon>Legionellales</taxon>
        <taxon>Legionellaceae</taxon>
        <taxon>Legionella</taxon>
    </lineage>
</organism>
<keyword id="KW-0067">ATP-binding</keyword>
<keyword id="KW-0143">Chaperone</keyword>
<keyword id="KW-0963">Cytoplasm</keyword>
<keyword id="KW-0547">Nucleotide-binding</keyword>
<name>HSLU_LEGPL</name>
<sequence>MVMTPREIVQELDKHIIGQDDAKRAVAIALRNRWRRMKIKDPVLRNEIMPKNILMIGPTGVGKTEIARRLANLAKAPFIKVEATKFTEVGYVGRDVDSIIRDLTDMAIKQEREFAMKKVEHLAEDAAEERILDVLLPPARGTLTPGEKNTTARQVFRKQLREGELNDNEIEIEVAATPVGIEIMAPPGMEEMTSQLQSMFQQVGSYRTKTRKMTVAKAMKILREEEAAKLINEEDIKLKAIESVEQNGIVFIDELDKIAKRSDTVSGGDVSREGVQRDLLPLVEGTTVSTKYGMVKSDHILFIASGAFHVAKPSDLIAELQGRLPIRVELSALSVEDFVRILTEPSASLTLQYSALMETEGLTLTFDETGIRRIAEVAWQVNERTENIGARRLYTVMERLLEVVSFEATDKAGETVHVDKAYVDKNLGQLIADEDLARYIL</sequence>
<dbReference type="EMBL" id="CR628337">
    <property type="protein sequence ID" value="CAH14912.1"/>
    <property type="molecule type" value="Genomic_DNA"/>
</dbReference>
<dbReference type="SMR" id="Q5WYQ8"/>
<dbReference type="KEGG" id="lpf:lpl0678"/>
<dbReference type="LegioList" id="lpl0678"/>
<dbReference type="HOGENOM" id="CLU_033123_0_0_6"/>
<dbReference type="Proteomes" id="UP000002517">
    <property type="component" value="Chromosome"/>
</dbReference>
<dbReference type="GO" id="GO:0009376">
    <property type="term" value="C:HslUV protease complex"/>
    <property type="evidence" value="ECO:0007669"/>
    <property type="project" value="UniProtKB-UniRule"/>
</dbReference>
<dbReference type="GO" id="GO:0005524">
    <property type="term" value="F:ATP binding"/>
    <property type="evidence" value="ECO:0007669"/>
    <property type="project" value="UniProtKB-UniRule"/>
</dbReference>
<dbReference type="GO" id="GO:0016887">
    <property type="term" value="F:ATP hydrolysis activity"/>
    <property type="evidence" value="ECO:0007669"/>
    <property type="project" value="InterPro"/>
</dbReference>
<dbReference type="GO" id="GO:0008233">
    <property type="term" value="F:peptidase activity"/>
    <property type="evidence" value="ECO:0007669"/>
    <property type="project" value="InterPro"/>
</dbReference>
<dbReference type="GO" id="GO:0036402">
    <property type="term" value="F:proteasome-activating activity"/>
    <property type="evidence" value="ECO:0007669"/>
    <property type="project" value="UniProtKB-UniRule"/>
</dbReference>
<dbReference type="GO" id="GO:0043335">
    <property type="term" value="P:protein unfolding"/>
    <property type="evidence" value="ECO:0007669"/>
    <property type="project" value="UniProtKB-UniRule"/>
</dbReference>
<dbReference type="GO" id="GO:0051603">
    <property type="term" value="P:proteolysis involved in protein catabolic process"/>
    <property type="evidence" value="ECO:0007669"/>
    <property type="project" value="TreeGrafter"/>
</dbReference>
<dbReference type="CDD" id="cd19498">
    <property type="entry name" value="RecA-like_HslU"/>
    <property type="match status" value="1"/>
</dbReference>
<dbReference type="FunFam" id="3.40.50.300:FF:000213">
    <property type="entry name" value="ATP-dependent protease ATPase subunit HslU"/>
    <property type="match status" value="1"/>
</dbReference>
<dbReference type="FunFam" id="3.40.50.300:FF:000220">
    <property type="entry name" value="ATP-dependent protease ATPase subunit HslU"/>
    <property type="match status" value="1"/>
</dbReference>
<dbReference type="Gene3D" id="1.10.8.60">
    <property type="match status" value="1"/>
</dbReference>
<dbReference type="Gene3D" id="3.40.50.300">
    <property type="entry name" value="P-loop containing nucleotide triphosphate hydrolases"/>
    <property type="match status" value="2"/>
</dbReference>
<dbReference type="HAMAP" id="MF_00249">
    <property type="entry name" value="HslU"/>
    <property type="match status" value="1"/>
</dbReference>
<dbReference type="InterPro" id="IPR003593">
    <property type="entry name" value="AAA+_ATPase"/>
</dbReference>
<dbReference type="InterPro" id="IPR050052">
    <property type="entry name" value="ATP-dep_Clp_protease_ClpX"/>
</dbReference>
<dbReference type="InterPro" id="IPR003959">
    <property type="entry name" value="ATPase_AAA_core"/>
</dbReference>
<dbReference type="InterPro" id="IPR019489">
    <property type="entry name" value="Clp_ATPase_C"/>
</dbReference>
<dbReference type="InterPro" id="IPR004491">
    <property type="entry name" value="HslU"/>
</dbReference>
<dbReference type="InterPro" id="IPR027417">
    <property type="entry name" value="P-loop_NTPase"/>
</dbReference>
<dbReference type="NCBIfam" id="TIGR00390">
    <property type="entry name" value="hslU"/>
    <property type="match status" value="1"/>
</dbReference>
<dbReference type="NCBIfam" id="NF003544">
    <property type="entry name" value="PRK05201.1"/>
    <property type="match status" value="1"/>
</dbReference>
<dbReference type="PANTHER" id="PTHR48102">
    <property type="entry name" value="ATP-DEPENDENT CLP PROTEASE ATP-BINDING SUBUNIT CLPX-LIKE, MITOCHONDRIAL-RELATED"/>
    <property type="match status" value="1"/>
</dbReference>
<dbReference type="PANTHER" id="PTHR48102:SF3">
    <property type="entry name" value="ATP-DEPENDENT PROTEASE ATPASE SUBUNIT HSLU"/>
    <property type="match status" value="1"/>
</dbReference>
<dbReference type="Pfam" id="PF00004">
    <property type="entry name" value="AAA"/>
    <property type="match status" value="1"/>
</dbReference>
<dbReference type="Pfam" id="PF07724">
    <property type="entry name" value="AAA_2"/>
    <property type="match status" value="1"/>
</dbReference>
<dbReference type="SMART" id="SM00382">
    <property type="entry name" value="AAA"/>
    <property type="match status" value="1"/>
</dbReference>
<dbReference type="SMART" id="SM01086">
    <property type="entry name" value="ClpB_D2-small"/>
    <property type="match status" value="1"/>
</dbReference>
<dbReference type="SUPFAM" id="SSF52540">
    <property type="entry name" value="P-loop containing nucleoside triphosphate hydrolases"/>
    <property type="match status" value="1"/>
</dbReference>
<accession>Q5WYQ8</accession>
<comment type="function">
    <text evidence="1">ATPase subunit of a proteasome-like degradation complex; this subunit has chaperone activity. The binding of ATP and its subsequent hydrolysis by HslU are essential for unfolding of protein substrates subsequently hydrolyzed by HslV. HslU recognizes the N-terminal part of its protein substrates and unfolds these before they are guided to HslV for hydrolysis.</text>
</comment>
<comment type="subunit">
    <text evidence="1">A double ring-shaped homohexamer of HslV is capped on each side by a ring-shaped HslU homohexamer. The assembly of the HslU/HslV complex is dependent on binding of ATP.</text>
</comment>
<comment type="subcellular location">
    <subcellularLocation>
        <location evidence="1">Cytoplasm</location>
    </subcellularLocation>
</comment>
<comment type="similarity">
    <text evidence="1">Belongs to the ClpX chaperone family. HslU subfamily.</text>
</comment>
<proteinExistence type="inferred from homology"/>
<protein>
    <recommendedName>
        <fullName evidence="1">ATP-dependent protease ATPase subunit HslU</fullName>
    </recommendedName>
    <alternativeName>
        <fullName evidence="1">Unfoldase HslU</fullName>
    </alternativeName>
</protein>
<reference key="1">
    <citation type="journal article" date="2004" name="Nat. Genet.">
        <title>Evidence in the Legionella pneumophila genome for exploitation of host cell functions and high genome plasticity.</title>
        <authorList>
            <person name="Cazalet C."/>
            <person name="Rusniok C."/>
            <person name="Brueggemann H."/>
            <person name="Zidane N."/>
            <person name="Magnier A."/>
            <person name="Ma L."/>
            <person name="Tichit M."/>
            <person name="Jarraud S."/>
            <person name="Bouchier C."/>
            <person name="Vandenesch F."/>
            <person name="Kunst F."/>
            <person name="Etienne J."/>
            <person name="Glaser P."/>
            <person name="Buchrieser C."/>
        </authorList>
    </citation>
    <scope>NUCLEOTIDE SEQUENCE [LARGE SCALE GENOMIC DNA]</scope>
    <source>
        <strain>Lens</strain>
    </source>
</reference>
<evidence type="ECO:0000255" key="1">
    <source>
        <dbReference type="HAMAP-Rule" id="MF_00249"/>
    </source>
</evidence>